<gene>
    <name type="ordered locus">PputGB1_3996</name>
</gene>
<organism>
    <name type="scientific">Pseudomonas putida (strain GB-1)</name>
    <dbReference type="NCBI Taxonomy" id="76869"/>
    <lineage>
        <taxon>Bacteria</taxon>
        <taxon>Pseudomonadati</taxon>
        <taxon>Pseudomonadota</taxon>
        <taxon>Gammaproteobacteria</taxon>
        <taxon>Pseudomonadales</taxon>
        <taxon>Pseudomonadaceae</taxon>
        <taxon>Pseudomonas</taxon>
    </lineage>
</organism>
<name>PHS_PSEPG</name>
<sequence>MNALNQAHCEACRADAPKVTDEELAELIREIPDWNIEVRDGHMELERVFLFKNFKHALAFTNAVGEIAEAEGHHPGLLTEWGKVTVTWWSHSIKGLHRNDFIMCARTDKVAEVAEGRK</sequence>
<reference key="1">
    <citation type="submission" date="2008-01" db="EMBL/GenBank/DDBJ databases">
        <title>Complete sequence of Pseudomonas putida GB-1.</title>
        <authorList>
            <consortium name="US DOE Joint Genome Institute"/>
            <person name="Copeland A."/>
            <person name="Lucas S."/>
            <person name="Lapidus A."/>
            <person name="Barry K."/>
            <person name="Glavina del Rio T."/>
            <person name="Dalin E."/>
            <person name="Tice H."/>
            <person name="Pitluck S."/>
            <person name="Bruce D."/>
            <person name="Goodwin L."/>
            <person name="Chertkov O."/>
            <person name="Brettin T."/>
            <person name="Detter J.C."/>
            <person name="Han C."/>
            <person name="Kuske C.R."/>
            <person name="Schmutz J."/>
            <person name="Larimer F."/>
            <person name="Land M."/>
            <person name="Hauser L."/>
            <person name="Kyrpides N."/>
            <person name="Kim E."/>
            <person name="McCarthy J.K."/>
            <person name="Richardson P."/>
        </authorList>
    </citation>
    <scope>NUCLEOTIDE SEQUENCE [LARGE SCALE GENOMIC DNA]</scope>
    <source>
        <strain>GB-1</strain>
    </source>
</reference>
<comment type="catalytic activity">
    <reaction evidence="1">
        <text>(4aS,6R)-4a-hydroxy-L-erythro-5,6,7,8-tetrahydrobiopterin = (6R)-L-erythro-6,7-dihydrobiopterin + H2O</text>
        <dbReference type="Rhea" id="RHEA:11920"/>
        <dbReference type="ChEBI" id="CHEBI:15377"/>
        <dbReference type="ChEBI" id="CHEBI:15642"/>
        <dbReference type="ChEBI" id="CHEBI:43120"/>
        <dbReference type="EC" id="4.2.1.96"/>
    </reaction>
</comment>
<comment type="similarity">
    <text evidence="1">Belongs to the pterin-4-alpha-carbinolamine dehydratase family.</text>
</comment>
<keyword id="KW-0456">Lyase</keyword>
<evidence type="ECO:0000255" key="1">
    <source>
        <dbReference type="HAMAP-Rule" id="MF_00434"/>
    </source>
</evidence>
<feature type="chain" id="PRO_1000080612" description="Putative pterin-4-alpha-carbinolamine dehydratase">
    <location>
        <begin position="1"/>
        <end position="118"/>
    </location>
</feature>
<proteinExistence type="inferred from homology"/>
<protein>
    <recommendedName>
        <fullName evidence="1">Putative pterin-4-alpha-carbinolamine dehydratase</fullName>
        <shortName evidence="1">PHS</shortName>
        <ecNumber evidence="1">4.2.1.96</ecNumber>
    </recommendedName>
    <alternativeName>
        <fullName evidence="1">4-alpha-hydroxy-tetrahydropterin dehydratase</fullName>
    </alternativeName>
    <alternativeName>
        <fullName evidence="1">Pterin carbinolamine dehydratase</fullName>
        <shortName evidence="1">PCD</shortName>
    </alternativeName>
</protein>
<dbReference type="EC" id="4.2.1.96" evidence="1"/>
<dbReference type="EMBL" id="CP000926">
    <property type="protein sequence ID" value="ABY99886.1"/>
    <property type="molecule type" value="Genomic_DNA"/>
</dbReference>
<dbReference type="RefSeq" id="WP_012273573.1">
    <property type="nucleotide sequence ID" value="NC_010322.1"/>
</dbReference>
<dbReference type="SMR" id="B0KRW3"/>
<dbReference type="KEGG" id="ppg:PputGB1_3996"/>
<dbReference type="eggNOG" id="COG2154">
    <property type="taxonomic scope" value="Bacteria"/>
</dbReference>
<dbReference type="HOGENOM" id="CLU_081974_2_2_6"/>
<dbReference type="Proteomes" id="UP000002157">
    <property type="component" value="Chromosome"/>
</dbReference>
<dbReference type="GO" id="GO:0008124">
    <property type="term" value="F:4-alpha-hydroxytetrahydrobiopterin dehydratase activity"/>
    <property type="evidence" value="ECO:0007669"/>
    <property type="project" value="UniProtKB-UniRule"/>
</dbReference>
<dbReference type="GO" id="GO:0006729">
    <property type="term" value="P:tetrahydrobiopterin biosynthetic process"/>
    <property type="evidence" value="ECO:0007669"/>
    <property type="project" value="InterPro"/>
</dbReference>
<dbReference type="CDD" id="cd00913">
    <property type="entry name" value="PCD_DCoH_subfamily_a"/>
    <property type="match status" value="1"/>
</dbReference>
<dbReference type="Gene3D" id="3.30.1360.20">
    <property type="entry name" value="Transcriptional coactivator/pterin dehydratase"/>
    <property type="match status" value="1"/>
</dbReference>
<dbReference type="HAMAP" id="MF_00434">
    <property type="entry name" value="Pterin_4_alpha"/>
    <property type="match status" value="1"/>
</dbReference>
<dbReference type="InterPro" id="IPR036428">
    <property type="entry name" value="PCD_sf"/>
</dbReference>
<dbReference type="InterPro" id="IPR050376">
    <property type="entry name" value="Pterin-4-alpha-carb_dehyd"/>
</dbReference>
<dbReference type="InterPro" id="IPR001533">
    <property type="entry name" value="Pterin_deHydtase"/>
</dbReference>
<dbReference type="NCBIfam" id="NF002016">
    <property type="entry name" value="PRK00823.1-1"/>
    <property type="match status" value="1"/>
</dbReference>
<dbReference type="PANTHER" id="PTHR42805">
    <property type="entry name" value="PTERIN-4-ALPHA-CARBINOLAMINE DEHYDRATASE-RELATED"/>
    <property type="match status" value="1"/>
</dbReference>
<dbReference type="PANTHER" id="PTHR42805:SF1">
    <property type="entry name" value="PTERIN-4-ALPHA-CARBINOLAMINE DEHYDRATASE-RELATED"/>
    <property type="match status" value="1"/>
</dbReference>
<dbReference type="Pfam" id="PF01329">
    <property type="entry name" value="Pterin_4a"/>
    <property type="match status" value="1"/>
</dbReference>
<dbReference type="SUPFAM" id="SSF55248">
    <property type="entry name" value="PCD-like"/>
    <property type="match status" value="1"/>
</dbReference>
<accession>B0KRW3</accession>